<accession>O66493</accession>
<sequence>MSLRYLRFLTAGESHGKGLTAILEGIPANLPLSEEEINHELRRRQRGYGRGGRMKIEKDTAEILSGVRFGKTLGSPIALFIRNRDWENWKEKMAIEGEPSPSVVPFTRPRPGHADLSGGIKYNQRDLRNILERASARETAARVAVGAVCKKFLSEFGIKIGSFVVSIGQKEVEELKDKSYFANPEKLLSYHEKAEDSELRIPFPEKDEEFKTYIDEVKEKGESLGGVFEVFALNVPPGLGSHIQWDRRIDGRIAQAMMSIQAIKGVEIGLGFEAARRFGSQVHDEIGWSEGKGYFRHSNNLGGTEGGITNGMPIVVRVAMKPIPTLKNPLRSVDIETKEEMKAGKERTDIVAVPAASVVGEAMLAIVLADALLEKLGGDFMEEVKKRFEDYVNHVKSF</sequence>
<organism>
    <name type="scientific">Aquifex aeolicus (strain VF5)</name>
    <dbReference type="NCBI Taxonomy" id="224324"/>
    <lineage>
        <taxon>Bacteria</taxon>
        <taxon>Pseudomonadati</taxon>
        <taxon>Aquificota</taxon>
        <taxon>Aquificia</taxon>
        <taxon>Aquificales</taxon>
        <taxon>Aquificaceae</taxon>
        <taxon>Aquifex</taxon>
    </lineage>
</organism>
<reference key="1">
    <citation type="journal article" date="1998" name="Nature">
        <title>The complete genome of the hyperthermophilic bacterium Aquifex aeolicus.</title>
        <authorList>
            <person name="Deckert G."/>
            <person name="Warren P.V."/>
            <person name="Gaasterland T."/>
            <person name="Young W.G."/>
            <person name="Lenox A.L."/>
            <person name="Graham D.E."/>
            <person name="Overbeek R."/>
            <person name="Snead M.A."/>
            <person name="Keller M."/>
            <person name="Aujay M."/>
            <person name="Huber R."/>
            <person name="Feldman R.A."/>
            <person name="Short J.M."/>
            <person name="Olsen G.J."/>
            <person name="Swanson R.V."/>
        </authorList>
    </citation>
    <scope>NUCLEOTIDE SEQUENCE [LARGE SCALE GENOMIC DNA]</scope>
    <source>
        <strain>VF5</strain>
    </source>
</reference>
<reference key="2">
    <citation type="journal article" date="2004" name="Proteins">
        <title>Crystal structure of chorismate synthase from Aquifex aeolicus reveals a novel beta alpha beta sandwich topology.</title>
        <authorList>
            <person name="Viola C.M."/>
            <person name="Saridakis V."/>
            <person name="Christendat D."/>
        </authorList>
    </citation>
    <scope>X-RAY CRYSTALLOGRAPHY (2.05 ANGSTROMS)</scope>
    <scope>SUBUNIT</scope>
</reference>
<comment type="function">
    <text evidence="1">Catalyzes the anti-1,4-elimination of the C-3 phosphate and the C-6 proR hydrogen from 5-enolpyruvylshikimate-3-phosphate (EPSP) to yield chorismate, which is the branch point compound that serves as the starting substrate for the three terminal pathways of aromatic amino acid biosynthesis. This reaction introduces a second double bond into the aromatic ring system.</text>
</comment>
<comment type="catalytic activity">
    <reaction evidence="1">
        <text>5-O-(1-carboxyvinyl)-3-phosphoshikimate = chorismate + phosphate</text>
        <dbReference type="Rhea" id="RHEA:21020"/>
        <dbReference type="ChEBI" id="CHEBI:29748"/>
        <dbReference type="ChEBI" id="CHEBI:43474"/>
        <dbReference type="ChEBI" id="CHEBI:57701"/>
        <dbReference type="EC" id="4.2.3.5"/>
    </reaction>
</comment>
<comment type="cofactor">
    <cofactor evidence="1">
        <name>FMNH2</name>
        <dbReference type="ChEBI" id="CHEBI:57618"/>
    </cofactor>
    <text evidence="1">Reduced FMN (FMNH(2)).</text>
</comment>
<comment type="pathway">
    <text evidence="1">Metabolic intermediate biosynthesis; chorismate biosynthesis; chorismate from D-erythrose 4-phosphate and phosphoenolpyruvate: step 7/7.</text>
</comment>
<comment type="subunit">
    <text evidence="1 2">Homotetramer.</text>
</comment>
<comment type="similarity">
    <text evidence="1">Belongs to the chorismate synthase family.</text>
</comment>
<proteinExistence type="evidence at protein level"/>
<keyword id="KW-0002">3D-structure</keyword>
<keyword id="KW-0028">Amino-acid biosynthesis</keyword>
<keyword id="KW-0057">Aromatic amino acid biosynthesis</keyword>
<keyword id="KW-0274">FAD</keyword>
<keyword id="KW-0285">Flavoprotein</keyword>
<keyword id="KW-0288">FMN</keyword>
<keyword id="KW-0456">Lyase</keyword>
<keyword id="KW-0521">NADP</keyword>
<keyword id="KW-1185">Reference proteome</keyword>
<gene>
    <name evidence="1" type="primary">aroC</name>
    <name type="ordered locus">aq_081</name>
</gene>
<feature type="chain" id="PRO_0000140537" description="Chorismate synthase">
    <location>
        <begin position="1"/>
        <end position="398"/>
    </location>
</feature>
<feature type="binding site" evidence="1">
    <location>
        <position position="44"/>
    </location>
    <ligand>
        <name>NADP(+)</name>
        <dbReference type="ChEBI" id="CHEBI:58349"/>
    </ligand>
</feature>
<feature type="binding site" evidence="1">
    <location>
        <position position="50"/>
    </location>
    <ligand>
        <name>NADP(+)</name>
        <dbReference type="ChEBI" id="CHEBI:58349"/>
    </ligand>
</feature>
<feature type="binding site" evidence="1">
    <location>
        <begin position="133"/>
        <end position="135"/>
    </location>
    <ligand>
        <name>FMN</name>
        <dbReference type="ChEBI" id="CHEBI:58210"/>
    </ligand>
</feature>
<feature type="binding site" evidence="1">
    <location>
        <begin position="261"/>
        <end position="262"/>
    </location>
    <ligand>
        <name>FMN</name>
        <dbReference type="ChEBI" id="CHEBI:58210"/>
    </ligand>
</feature>
<feature type="binding site" evidence="1">
    <location>
        <position position="306"/>
    </location>
    <ligand>
        <name>FMN</name>
        <dbReference type="ChEBI" id="CHEBI:58210"/>
    </ligand>
</feature>
<feature type="binding site" evidence="1">
    <location>
        <begin position="321"/>
        <end position="325"/>
    </location>
    <ligand>
        <name>FMN</name>
        <dbReference type="ChEBI" id="CHEBI:58210"/>
    </ligand>
</feature>
<feature type="binding site" evidence="1">
    <location>
        <position position="347"/>
    </location>
    <ligand>
        <name>FMN</name>
        <dbReference type="ChEBI" id="CHEBI:58210"/>
    </ligand>
</feature>
<feature type="strand" evidence="3">
    <location>
        <begin position="7"/>
        <end position="11"/>
    </location>
</feature>
<feature type="strand" evidence="3">
    <location>
        <begin position="16"/>
        <end position="24"/>
    </location>
</feature>
<feature type="helix" evidence="3">
    <location>
        <begin position="34"/>
        <end position="45"/>
    </location>
</feature>
<feature type="strand" evidence="3">
    <location>
        <begin position="61"/>
        <end position="68"/>
    </location>
</feature>
<feature type="strand" evidence="3">
    <location>
        <begin position="77"/>
        <end position="82"/>
    </location>
</feature>
<feature type="turn" evidence="3">
    <location>
        <begin position="119"/>
        <end position="123"/>
    </location>
</feature>
<feature type="helix" evidence="3">
    <location>
        <begin position="128"/>
        <end position="134"/>
    </location>
</feature>
<feature type="helix" evidence="3">
    <location>
        <begin position="136"/>
        <end position="138"/>
    </location>
</feature>
<feature type="helix" evidence="3">
    <location>
        <begin position="139"/>
        <end position="154"/>
    </location>
</feature>
<feature type="turn" evidence="3">
    <location>
        <begin position="155"/>
        <end position="157"/>
    </location>
</feature>
<feature type="strand" evidence="3">
    <location>
        <begin position="159"/>
        <end position="167"/>
    </location>
</feature>
<feature type="helix" evidence="3">
    <location>
        <begin position="173"/>
        <end position="175"/>
    </location>
</feature>
<feature type="helix" evidence="3">
    <location>
        <begin position="178"/>
        <end position="182"/>
    </location>
</feature>
<feature type="helix" evidence="3">
    <location>
        <begin position="184"/>
        <end position="194"/>
    </location>
</feature>
<feature type="helix" evidence="3">
    <location>
        <begin position="204"/>
        <end position="206"/>
    </location>
</feature>
<feature type="helix" evidence="3">
    <location>
        <begin position="207"/>
        <end position="218"/>
    </location>
</feature>
<feature type="turn" evidence="3">
    <location>
        <begin position="219"/>
        <end position="221"/>
    </location>
</feature>
<feature type="strand" evidence="3">
    <location>
        <begin position="226"/>
        <end position="234"/>
    </location>
</feature>
<feature type="strand" evidence="3">
    <location>
        <begin position="242"/>
        <end position="244"/>
    </location>
</feature>
<feature type="helix" evidence="3">
    <location>
        <begin position="245"/>
        <end position="247"/>
    </location>
</feature>
<feature type="helix" evidence="3">
    <location>
        <begin position="249"/>
        <end position="258"/>
    </location>
</feature>
<feature type="strand" evidence="3">
    <location>
        <begin position="263"/>
        <end position="268"/>
    </location>
</feature>
<feature type="helix" evidence="3">
    <location>
        <begin position="271"/>
        <end position="276"/>
    </location>
</feature>
<feature type="helix" evidence="3">
    <location>
        <begin position="279"/>
        <end position="281"/>
    </location>
</feature>
<feature type="strand" evidence="3">
    <location>
        <begin position="286"/>
        <end position="289"/>
    </location>
</feature>
<feature type="turn" evidence="3">
    <location>
        <begin position="290"/>
        <end position="292"/>
    </location>
</feature>
<feature type="strand" evidence="3">
    <location>
        <begin position="293"/>
        <end position="297"/>
    </location>
</feature>
<feature type="turn" evidence="3">
    <location>
        <begin position="300"/>
        <end position="303"/>
    </location>
</feature>
<feature type="strand" evidence="3">
    <location>
        <begin position="314"/>
        <end position="320"/>
    </location>
</feature>
<feature type="helix" evidence="3">
    <location>
        <begin position="353"/>
        <end position="376"/>
    </location>
</feature>
<feature type="helix" evidence="3">
    <location>
        <begin position="381"/>
        <end position="396"/>
    </location>
</feature>
<name>AROC_AQUAE</name>
<dbReference type="EC" id="4.2.3.5" evidence="1"/>
<dbReference type="EMBL" id="AE000657">
    <property type="protein sequence ID" value="AAC06434.1"/>
    <property type="molecule type" value="Genomic_DNA"/>
</dbReference>
<dbReference type="PIR" id="B70308">
    <property type="entry name" value="B70308"/>
</dbReference>
<dbReference type="RefSeq" id="NP_213053.1">
    <property type="nucleotide sequence ID" value="NC_000918.1"/>
</dbReference>
<dbReference type="RefSeq" id="WP_010879991.1">
    <property type="nucleotide sequence ID" value="NC_000918.1"/>
</dbReference>
<dbReference type="PDB" id="1Q1L">
    <property type="method" value="X-ray"/>
    <property type="resolution" value="2.05 A"/>
    <property type="chains" value="A/B/C/D=1-398"/>
</dbReference>
<dbReference type="PDBsum" id="1Q1L"/>
<dbReference type="SMR" id="O66493"/>
<dbReference type="FunCoup" id="O66493">
    <property type="interactions" value="405"/>
</dbReference>
<dbReference type="STRING" id="224324.aq_081"/>
<dbReference type="EnsemblBacteria" id="AAC06434">
    <property type="protein sequence ID" value="AAC06434"/>
    <property type="gene ID" value="aq_081"/>
</dbReference>
<dbReference type="KEGG" id="aae:aq_081"/>
<dbReference type="PATRIC" id="fig|224324.8.peg.71"/>
<dbReference type="eggNOG" id="COG0082">
    <property type="taxonomic scope" value="Bacteria"/>
</dbReference>
<dbReference type="HOGENOM" id="CLU_034547_2_0_0"/>
<dbReference type="InParanoid" id="O66493"/>
<dbReference type="OrthoDB" id="9771806at2"/>
<dbReference type="BRENDA" id="4.2.3.5">
    <property type="organism ID" value="396"/>
</dbReference>
<dbReference type="UniPathway" id="UPA00053">
    <property type="reaction ID" value="UER00090"/>
</dbReference>
<dbReference type="EvolutionaryTrace" id="O66493"/>
<dbReference type="Proteomes" id="UP000000798">
    <property type="component" value="Chromosome"/>
</dbReference>
<dbReference type="GO" id="GO:0005829">
    <property type="term" value="C:cytosol"/>
    <property type="evidence" value="ECO:0000318"/>
    <property type="project" value="GO_Central"/>
</dbReference>
<dbReference type="GO" id="GO:0004107">
    <property type="term" value="F:chorismate synthase activity"/>
    <property type="evidence" value="ECO:0000318"/>
    <property type="project" value="GO_Central"/>
</dbReference>
<dbReference type="GO" id="GO:0010181">
    <property type="term" value="F:FMN binding"/>
    <property type="evidence" value="ECO:0000318"/>
    <property type="project" value="GO_Central"/>
</dbReference>
<dbReference type="GO" id="GO:0008652">
    <property type="term" value="P:amino acid biosynthetic process"/>
    <property type="evidence" value="ECO:0007669"/>
    <property type="project" value="UniProtKB-KW"/>
</dbReference>
<dbReference type="GO" id="GO:0009073">
    <property type="term" value="P:aromatic amino acid family biosynthetic process"/>
    <property type="evidence" value="ECO:0000318"/>
    <property type="project" value="GO_Central"/>
</dbReference>
<dbReference type="GO" id="GO:0009423">
    <property type="term" value="P:chorismate biosynthetic process"/>
    <property type="evidence" value="ECO:0000318"/>
    <property type="project" value="GO_Central"/>
</dbReference>
<dbReference type="CDD" id="cd07304">
    <property type="entry name" value="Chorismate_synthase"/>
    <property type="match status" value="1"/>
</dbReference>
<dbReference type="DisProt" id="DP00559"/>
<dbReference type="FunFam" id="3.60.150.10:FF:000002">
    <property type="entry name" value="Chorismate synthase"/>
    <property type="match status" value="1"/>
</dbReference>
<dbReference type="Gene3D" id="3.60.150.10">
    <property type="entry name" value="Chorismate synthase AroC"/>
    <property type="match status" value="1"/>
</dbReference>
<dbReference type="HAMAP" id="MF_00300">
    <property type="entry name" value="Chorismate_synth"/>
    <property type="match status" value="1"/>
</dbReference>
<dbReference type="InterPro" id="IPR000453">
    <property type="entry name" value="Chorismate_synth"/>
</dbReference>
<dbReference type="InterPro" id="IPR035904">
    <property type="entry name" value="Chorismate_synth_AroC_sf"/>
</dbReference>
<dbReference type="InterPro" id="IPR020541">
    <property type="entry name" value="Chorismate_synthase_CS"/>
</dbReference>
<dbReference type="NCBIfam" id="TIGR00033">
    <property type="entry name" value="aroC"/>
    <property type="match status" value="1"/>
</dbReference>
<dbReference type="NCBIfam" id="NF003793">
    <property type="entry name" value="PRK05382.1"/>
    <property type="match status" value="1"/>
</dbReference>
<dbReference type="PANTHER" id="PTHR21085">
    <property type="entry name" value="CHORISMATE SYNTHASE"/>
    <property type="match status" value="1"/>
</dbReference>
<dbReference type="PANTHER" id="PTHR21085:SF0">
    <property type="entry name" value="CHORISMATE SYNTHASE"/>
    <property type="match status" value="1"/>
</dbReference>
<dbReference type="Pfam" id="PF01264">
    <property type="entry name" value="Chorismate_synt"/>
    <property type="match status" value="1"/>
</dbReference>
<dbReference type="PIRSF" id="PIRSF001456">
    <property type="entry name" value="Chorismate_synth"/>
    <property type="match status" value="1"/>
</dbReference>
<dbReference type="SUPFAM" id="SSF103263">
    <property type="entry name" value="Chorismate synthase, AroC"/>
    <property type="match status" value="1"/>
</dbReference>
<dbReference type="PROSITE" id="PS00787">
    <property type="entry name" value="CHORISMATE_SYNTHASE_1"/>
    <property type="match status" value="1"/>
</dbReference>
<dbReference type="PROSITE" id="PS00788">
    <property type="entry name" value="CHORISMATE_SYNTHASE_2"/>
    <property type="match status" value="1"/>
</dbReference>
<protein>
    <recommendedName>
        <fullName evidence="1">Chorismate synthase</fullName>
        <shortName evidence="1">CS</shortName>
        <ecNumber evidence="1">4.2.3.5</ecNumber>
    </recommendedName>
    <alternativeName>
        <fullName evidence="1">5-enolpyruvylshikimate-3-phosphate phospholyase</fullName>
    </alternativeName>
</protein>
<evidence type="ECO:0000255" key="1">
    <source>
        <dbReference type="HAMAP-Rule" id="MF_00300"/>
    </source>
</evidence>
<evidence type="ECO:0000269" key="2">
    <source>
    </source>
</evidence>
<evidence type="ECO:0007829" key="3">
    <source>
        <dbReference type="PDB" id="1Q1L"/>
    </source>
</evidence>